<keyword id="KW-0071">Autoinducer synthesis</keyword>
<keyword id="KW-0408">Iron</keyword>
<keyword id="KW-0456">Lyase</keyword>
<keyword id="KW-0479">Metal-binding</keyword>
<keyword id="KW-0673">Quorum sensing</keyword>
<keyword id="KW-1185">Reference proteome</keyword>
<name>LUXS_CLOAB</name>
<organism>
    <name type="scientific">Clostridium acetobutylicum (strain ATCC 824 / DSM 792 / JCM 1419 / IAM 19013 / LMG 5710 / NBRC 13948 / NRRL B-527 / VKM B-1787 / 2291 / W)</name>
    <dbReference type="NCBI Taxonomy" id="272562"/>
    <lineage>
        <taxon>Bacteria</taxon>
        <taxon>Bacillati</taxon>
        <taxon>Bacillota</taxon>
        <taxon>Clostridia</taxon>
        <taxon>Eubacteriales</taxon>
        <taxon>Clostridiaceae</taxon>
        <taxon>Clostridium</taxon>
    </lineage>
</organism>
<dbReference type="EC" id="4.4.1.21"/>
<dbReference type="EMBL" id="AE001437">
    <property type="protein sequence ID" value="AAK80884.1"/>
    <property type="molecule type" value="Genomic_DNA"/>
</dbReference>
<dbReference type="PIR" id="A97262">
    <property type="entry name" value="A97262"/>
</dbReference>
<dbReference type="RefSeq" id="NP_349544.1">
    <property type="nucleotide sequence ID" value="NC_003030.1"/>
</dbReference>
<dbReference type="RefSeq" id="WP_010966225.1">
    <property type="nucleotide sequence ID" value="NC_003030.1"/>
</dbReference>
<dbReference type="SMR" id="Q97F13"/>
<dbReference type="STRING" id="272562.CA_C2942"/>
<dbReference type="KEGG" id="cac:CA_C2942"/>
<dbReference type="PATRIC" id="fig|272562.8.peg.3126"/>
<dbReference type="eggNOG" id="COG1854">
    <property type="taxonomic scope" value="Bacteria"/>
</dbReference>
<dbReference type="HOGENOM" id="CLU_107531_1_0_9"/>
<dbReference type="OrthoDB" id="9788129at2"/>
<dbReference type="Proteomes" id="UP000000814">
    <property type="component" value="Chromosome"/>
</dbReference>
<dbReference type="GO" id="GO:0005506">
    <property type="term" value="F:iron ion binding"/>
    <property type="evidence" value="ECO:0007669"/>
    <property type="project" value="InterPro"/>
</dbReference>
<dbReference type="GO" id="GO:0043768">
    <property type="term" value="F:S-ribosylhomocysteine lyase activity"/>
    <property type="evidence" value="ECO:0007669"/>
    <property type="project" value="UniProtKB-UniRule"/>
</dbReference>
<dbReference type="GO" id="GO:0009372">
    <property type="term" value="P:quorum sensing"/>
    <property type="evidence" value="ECO:0007669"/>
    <property type="project" value="UniProtKB-UniRule"/>
</dbReference>
<dbReference type="Gene3D" id="3.30.1360.80">
    <property type="entry name" value="S-ribosylhomocysteinase (LuxS)"/>
    <property type="match status" value="1"/>
</dbReference>
<dbReference type="HAMAP" id="MF_00091">
    <property type="entry name" value="LuxS"/>
    <property type="match status" value="1"/>
</dbReference>
<dbReference type="InterPro" id="IPR037005">
    <property type="entry name" value="LuxS_sf"/>
</dbReference>
<dbReference type="InterPro" id="IPR011249">
    <property type="entry name" value="Metalloenz_LuxS/M16"/>
</dbReference>
<dbReference type="InterPro" id="IPR003815">
    <property type="entry name" value="S-ribosylhomocysteinase"/>
</dbReference>
<dbReference type="NCBIfam" id="NF002604">
    <property type="entry name" value="PRK02260.1-4"/>
    <property type="match status" value="1"/>
</dbReference>
<dbReference type="PANTHER" id="PTHR35799">
    <property type="entry name" value="S-RIBOSYLHOMOCYSTEINE LYASE"/>
    <property type="match status" value="1"/>
</dbReference>
<dbReference type="PANTHER" id="PTHR35799:SF1">
    <property type="entry name" value="S-RIBOSYLHOMOCYSTEINE LYASE"/>
    <property type="match status" value="1"/>
</dbReference>
<dbReference type="Pfam" id="PF02664">
    <property type="entry name" value="LuxS"/>
    <property type="match status" value="1"/>
</dbReference>
<dbReference type="PIRSF" id="PIRSF006160">
    <property type="entry name" value="AI2"/>
    <property type="match status" value="1"/>
</dbReference>
<dbReference type="PRINTS" id="PR01487">
    <property type="entry name" value="LUXSPROTEIN"/>
</dbReference>
<dbReference type="SUPFAM" id="SSF63411">
    <property type="entry name" value="LuxS/MPP-like metallohydrolase"/>
    <property type="match status" value="1"/>
</dbReference>
<feature type="chain" id="PRO_0000172216" description="S-ribosylhomocysteine lyase">
    <location>
        <begin position="1"/>
        <end position="158"/>
    </location>
</feature>
<feature type="binding site" evidence="1">
    <location>
        <position position="53"/>
    </location>
    <ligand>
        <name>Fe cation</name>
        <dbReference type="ChEBI" id="CHEBI:24875"/>
    </ligand>
</feature>
<feature type="binding site" evidence="1">
    <location>
        <position position="57"/>
    </location>
    <ligand>
        <name>Fe cation</name>
        <dbReference type="ChEBI" id="CHEBI:24875"/>
    </ligand>
</feature>
<feature type="binding site" evidence="1">
    <location>
        <position position="124"/>
    </location>
    <ligand>
        <name>Fe cation</name>
        <dbReference type="ChEBI" id="CHEBI:24875"/>
    </ligand>
</feature>
<accession>Q97F13</accession>
<gene>
    <name type="primary">luxS</name>
    <name type="ordered locus">CA_C2942</name>
</gene>
<sequence>MEKIASFTVNHLTLQPGVYVSRKDKFGDVVITTFDIRMTSPNEEPVMNTAEVHTIEHLGATFLRNHGTYAEKTVYFGPMGCRTGFYLILQGDYTSNDIVPLLREMYKFIADFKGEVPGAAARDCGNYLDMNLPMANYWGKKFSALLDNISEDRLNYPE</sequence>
<evidence type="ECO:0000250" key="1"/>
<evidence type="ECO:0000305" key="2"/>
<protein>
    <recommendedName>
        <fullName>S-ribosylhomocysteine lyase</fullName>
        <ecNumber>4.4.1.21</ecNumber>
    </recommendedName>
    <alternativeName>
        <fullName>AI-2 synthesis protein</fullName>
    </alternativeName>
    <alternativeName>
        <fullName>Autoinducer-2 production protein LuxS</fullName>
    </alternativeName>
</protein>
<reference key="1">
    <citation type="journal article" date="2001" name="J. Bacteriol.">
        <title>Genome sequence and comparative analysis of the solvent-producing bacterium Clostridium acetobutylicum.</title>
        <authorList>
            <person name="Noelling J."/>
            <person name="Breton G."/>
            <person name="Omelchenko M.V."/>
            <person name="Makarova K.S."/>
            <person name="Zeng Q."/>
            <person name="Gibson R."/>
            <person name="Lee H.M."/>
            <person name="Dubois J."/>
            <person name="Qiu D."/>
            <person name="Hitti J."/>
            <person name="Wolf Y.I."/>
            <person name="Tatusov R.L."/>
            <person name="Sabathe F."/>
            <person name="Doucette-Stamm L.A."/>
            <person name="Soucaille P."/>
            <person name="Daly M.J."/>
            <person name="Bennett G.N."/>
            <person name="Koonin E.V."/>
            <person name="Smith D.R."/>
        </authorList>
    </citation>
    <scope>NUCLEOTIDE SEQUENCE [LARGE SCALE GENOMIC DNA]</scope>
    <source>
        <strain>ATCC 824 / DSM 792 / JCM 1419 / IAM 19013 / LMG 5710 / NBRC 13948 / NRRL B-527 / VKM B-1787 / 2291 / W</strain>
    </source>
</reference>
<proteinExistence type="inferred from homology"/>
<comment type="function">
    <text evidence="1">Involved in the synthesis of autoinducer 2 (AI-2) which is secreted by bacteria and is used to communicate both the cell density and the metabolic potential of the environment. The regulation of gene expression in response to changes in cell density is called quorum sensing. Catalyzes the transformation of S-ribosylhomocysteine (RHC) to homocysteine (HC) and 4,5-dihydroxy-2,3-pentadione (DPD) (By similarity).</text>
</comment>
<comment type="catalytic activity">
    <reaction>
        <text>S-(5-deoxy-D-ribos-5-yl)-L-homocysteine = (S)-4,5-dihydroxypentane-2,3-dione + L-homocysteine</text>
        <dbReference type="Rhea" id="RHEA:17753"/>
        <dbReference type="ChEBI" id="CHEBI:29484"/>
        <dbReference type="ChEBI" id="CHEBI:58195"/>
        <dbReference type="ChEBI" id="CHEBI:58199"/>
        <dbReference type="EC" id="4.4.1.21"/>
    </reaction>
</comment>
<comment type="cofactor">
    <cofactor evidence="1">
        <name>Fe cation</name>
        <dbReference type="ChEBI" id="CHEBI:24875"/>
    </cofactor>
    <text evidence="1">Binds 1 Fe cation per subunit.</text>
</comment>
<comment type="subunit">
    <text evidence="1">Homodimer.</text>
</comment>
<comment type="similarity">
    <text evidence="2">Belongs to the LuxS family.</text>
</comment>